<comment type="function">
    <text evidence="2 4">Forms the helical nucleocapsid (NC) with 12.71 N subunits per helical turn and a rise of 5.3 Angstrom per N subunit, protecting the genome from nucleases (By similarity). The encapsidated genomic RNA serves as template for transcription and replication; encapsidation by N is coupled to RNA synthesis (By similarity). Forms the encapsidation complex with the phosphoprotein protein P (By similarity). Before encapsidation, the newly synthesized free N protein, so-called N0, is chaperoned by P (By similarity).</text>
</comment>
<comment type="subunit">
    <text evidence="2 4 6">Homomultimer; forms the nucleocapsid (By similarity). Binds to the viral genomic RNA (By similarity). N0 interacts with the phosphoprotein (via N-terminus); this interaction allows P to chaperon N0 to avoid N polymerization before encapsidation (By similarity). Interacts (via N-terminus) as N-RNA template with the phosphoprotein (via C-terminus); this interaction positions the polymerase on the template (By similarity).</text>
</comment>
<comment type="subcellular location">
    <subcellularLocation>
        <location evidence="5">Virion</location>
    </subcellularLocation>
    <subcellularLocation>
        <location evidence="2">Host cytoplasm</location>
    </subcellularLocation>
    <text evidence="2">Found in cytoplasmic viral factories.</text>
</comment>
<comment type="domain">
    <text evidence="4">Ncore is globular and carries the regions required for self-assembly and RNA-binding. Ntail is an intrinsically disordered monomeric domain in the C-terminus.</text>
</comment>
<comment type="similarity">
    <text evidence="7">Belongs to the paramyxoviruses nucleocapsid family.</text>
</comment>
<protein>
    <recommendedName>
        <fullName>Nucleoprotein</fullName>
    </recommendedName>
    <alternativeName>
        <fullName>Nucleocapsid protein</fullName>
        <shortName>NP</shortName>
        <shortName>Protein N</shortName>
    </alternativeName>
</protein>
<proteinExistence type="evidence at transcript level"/>
<name>NCAP_MUMP1</name>
<accession>P21277</accession>
<reference key="1">
    <citation type="journal article" date="1989" name="Virus Res.">
        <title>The mumps virus nucleocapsid mRNA sequence and homology among the Paramyxoviridae proteins.</title>
        <authorList>
            <person name="Elango N."/>
        </authorList>
    </citation>
    <scope>NUCLEOTIDE SEQUENCE [MRNA]</scope>
</reference>
<evidence type="ECO:0000250" key="1"/>
<evidence type="ECO:0000250" key="2">
    <source>
        <dbReference type="UniProtKB" id="D5LWW7"/>
    </source>
</evidence>
<evidence type="ECO:0000250" key="3">
    <source>
        <dbReference type="UniProtKB" id="O57286"/>
    </source>
</evidence>
<evidence type="ECO:0000250" key="4">
    <source>
        <dbReference type="UniProtKB" id="P06159"/>
    </source>
</evidence>
<evidence type="ECO:0000250" key="5">
    <source>
        <dbReference type="UniProtKB" id="Q77IS8"/>
    </source>
</evidence>
<evidence type="ECO:0000250" key="6">
    <source>
        <dbReference type="UniProtKB" id="Q9DQA5"/>
    </source>
</evidence>
<evidence type="ECO:0000305" key="7"/>
<sequence>MSSVLKAFERFTIEQELQDRGEEGSIPPETLKSAVKVFVINTPNPTTRYQMLNFCLRIICSQNRRASHRVGALIALFSLPSAGMQNHIRLADRSPEAQIERCEIDGFEPGTYRLIPNARANLTANEIAAYALLADDLPPTINNGTPYVHADVELQPCDEIEQFLDRCYSVLIQAWVMVCKCMTAYDQPAGSADRRFAKYQQQGRLEARYMLQPEAQRLIQTAIRKSLVVRQYLTFELQLARRQGLLSNRYYAMVGDIGKYIENSGLTAFFLTLKYALGTKWSPLSLAAFTGELTKLRSLMMLYRDIGEQARYLALLEAPQIMDFAPGGYPLIFSYAMGVGSVLDVQMRNYTYARPFLNGYYFQIGVETARRQQGTVDNRVADDLGLTPEQRNEVTQLVDRLARGRGAGIPGGPVNPFVPPVQQQQPAAVYADIPALEESDDDGDEDGGAGFQNGVQVPAVRQGGQTDFRAQPLQDPIQAQLFMPLYPQVSNIPNNRIIRSIASGGWKTKIYYDTTRMVILNKMQGANTETLSQTIPIKTHSCKWATGMSKSLT</sequence>
<organismHost>
    <name type="scientific">Homo sapiens</name>
    <name type="common">Human</name>
    <dbReference type="NCBI Taxonomy" id="9606"/>
</organismHost>
<gene>
    <name type="primary">N</name>
    <name type="synonym">NP</name>
</gene>
<feature type="chain" id="PRO_0000142662" description="Nucleoprotein">
    <location>
        <begin position="1"/>
        <end position="553"/>
    </location>
</feature>
<feature type="region of interest" description="P protein-binding" evidence="1">
    <location>
        <begin position="1"/>
        <end position="398"/>
    </location>
</feature>
<feature type="region of interest" description="Ntail" evidence="4">
    <location>
        <begin position="405"/>
        <end position="553"/>
    </location>
</feature>
<feature type="binding site" evidence="3">
    <location>
        <position position="180"/>
    </location>
    <ligand>
        <name>RNA</name>
        <dbReference type="ChEBI" id="CHEBI:33697"/>
    </ligand>
</feature>
<feature type="binding site" evidence="3">
    <location>
        <position position="195"/>
    </location>
    <ligand>
        <name>RNA</name>
        <dbReference type="ChEBI" id="CHEBI:33697"/>
    </ligand>
</feature>
<feature type="binding site" evidence="3">
    <location>
        <position position="260"/>
    </location>
    <ligand>
        <name>RNA</name>
        <dbReference type="ChEBI" id="CHEBI:33697"/>
    </ligand>
</feature>
<feature type="binding site" evidence="3">
    <location>
        <position position="350"/>
    </location>
    <ligand>
        <name>RNA</name>
        <dbReference type="ChEBI" id="CHEBI:33697"/>
    </ligand>
</feature>
<feature type="binding site" evidence="3">
    <location>
        <position position="354"/>
    </location>
    <ligand>
        <name>RNA</name>
        <dbReference type="ChEBI" id="CHEBI:33697"/>
    </ligand>
</feature>
<feature type="modified residue" description="Phosphoserine" evidence="6">
    <location>
        <position position="439"/>
    </location>
</feature>
<organism>
    <name type="scientific">Mumps virus (strain SBL-1)</name>
    <name type="common">MuV</name>
    <dbReference type="NCBI Taxonomy" id="11173"/>
    <lineage>
        <taxon>Viruses</taxon>
        <taxon>Riboviria</taxon>
        <taxon>Orthornavirae</taxon>
        <taxon>Negarnaviricota</taxon>
        <taxon>Haploviricotina</taxon>
        <taxon>Monjiviricetes</taxon>
        <taxon>Mononegavirales</taxon>
        <taxon>Paramyxoviridae</taxon>
        <taxon>Rubulavirinae</taxon>
        <taxon>Orthorubulavirus</taxon>
        <taxon>Orthorubulavirus parotitidis</taxon>
        <taxon>Mumps orthorubulavirus</taxon>
    </lineage>
</organism>
<keyword id="KW-0167">Capsid protein</keyword>
<keyword id="KW-1139">Helical capsid protein</keyword>
<keyword id="KW-1035">Host cytoplasm</keyword>
<keyword id="KW-0597">Phosphoprotein</keyword>
<keyword id="KW-0687">Ribonucleoprotein</keyword>
<keyword id="KW-0694">RNA-binding</keyword>
<keyword id="KW-0543">Viral nucleoprotein</keyword>
<keyword id="KW-0946">Virion</keyword>
<dbReference type="EMBL" id="X57997">
    <property type="protein sequence ID" value="CAA41061.1"/>
    <property type="molecule type" value="mRNA"/>
</dbReference>
<dbReference type="PIR" id="A42759">
    <property type="entry name" value="VHNZSB"/>
</dbReference>
<dbReference type="SMR" id="P21277"/>
<dbReference type="IntAct" id="P21277">
    <property type="interactions" value="2"/>
</dbReference>
<dbReference type="GO" id="GO:0019029">
    <property type="term" value="C:helical viral capsid"/>
    <property type="evidence" value="ECO:0007669"/>
    <property type="project" value="UniProtKB-KW"/>
</dbReference>
<dbReference type="GO" id="GO:0030430">
    <property type="term" value="C:host cell cytoplasm"/>
    <property type="evidence" value="ECO:0007669"/>
    <property type="project" value="UniProtKB-SubCell"/>
</dbReference>
<dbReference type="GO" id="GO:1990904">
    <property type="term" value="C:ribonucleoprotein complex"/>
    <property type="evidence" value="ECO:0007669"/>
    <property type="project" value="UniProtKB-KW"/>
</dbReference>
<dbReference type="GO" id="GO:0019013">
    <property type="term" value="C:viral nucleocapsid"/>
    <property type="evidence" value="ECO:0007669"/>
    <property type="project" value="UniProtKB-KW"/>
</dbReference>
<dbReference type="GO" id="GO:0003723">
    <property type="term" value="F:RNA binding"/>
    <property type="evidence" value="ECO:0007669"/>
    <property type="project" value="UniProtKB-KW"/>
</dbReference>
<dbReference type="GO" id="GO:0005198">
    <property type="term" value="F:structural molecule activity"/>
    <property type="evidence" value="ECO:0007669"/>
    <property type="project" value="InterPro"/>
</dbReference>
<dbReference type="InterPro" id="IPR002021">
    <property type="entry name" value="Paramyx_ncap"/>
</dbReference>
<dbReference type="Pfam" id="PF00973">
    <property type="entry name" value="Paramyxo_ncap"/>
    <property type="match status" value="1"/>
</dbReference>